<comment type="function">
    <text evidence="1">The RecF protein is involved in DNA metabolism; it is required for DNA replication and normal SOS inducibility. RecF binds preferentially to single-stranded, linear DNA. It also seems to bind ATP.</text>
</comment>
<comment type="subcellular location">
    <subcellularLocation>
        <location evidence="1">Cytoplasm</location>
    </subcellularLocation>
</comment>
<comment type="similarity">
    <text evidence="1">Belongs to the RecF family.</text>
</comment>
<sequence>MFISEIQLKNYRNYEKLELSFEDKVNVIIGENAQGKTNLMEAIYVLAMAKSHRTSNDRELIRWDEDFGQIKGKLQKRNSSLSLELNISKKGKKAKLNQLEQQKLSQYIGVMNVVMFAPEDLNLVKGSPQVRRRFLDMELGQIAPVYLYELSQYQKVLTQRNHLLKKMQGNSKNEETMLDVFTLQLIEHGTKILRKRFEFLHLLQEWAAPIHRGISRGLEELEIVYKPSVDVSESMDLSKIKEVYYESFQSVKQREIFRGTTLIGPHRDDLQFFVNSKNVQVFGSQGQQRTTALSLKLAEIELIYSEVKEYPILLLDDVLSELDDYRQSHLLNTIQGKVQTFVTTTSVDGIEHETLKEAKTIHVTNGTVDCEIDRA</sequence>
<proteinExistence type="inferred from homology"/>
<organism>
    <name type="scientific">Bacillus anthracis (strain A0248)</name>
    <dbReference type="NCBI Taxonomy" id="592021"/>
    <lineage>
        <taxon>Bacteria</taxon>
        <taxon>Bacillati</taxon>
        <taxon>Bacillota</taxon>
        <taxon>Bacilli</taxon>
        <taxon>Bacillales</taxon>
        <taxon>Bacillaceae</taxon>
        <taxon>Bacillus</taxon>
        <taxon>Bacillus cereus group</taxon>
    </lineage>
</organism>
<feature type="chain" id="PRO_1000133671" description="DNA replication and repair protein RecF">
    <location>
        <begin position="1"/>
        <end position="375"/>
    </location>
</feature>
<feature type="binding site" evidence="1">
    <location>
        <begin position="30"/>
        <end position="37"/>
    </location>
    <ligand>
        <name>ATP</name>
        <dbReference type="ChEBI" id="CHEBI:30616"/>
    </ligand>
</feature>
<reference key="1">
    <citation type="submission" date="2009-04" db="EMBL/GenBank/DDBJ databases">
        <title>Genome sequence of Bacillus anthracis A0248.</title>
        <authorList>
            <person name="Dodson R.J."/>
            <person name="Munk A.C."/>
            <person name="Bruce D."/>
            <person name="Detter C."/>
            <person name="Tapia R."/>
            <person name="Sutton G."/>
            <person name="Sims D."/>
            <person name="Brettin T."/>
        </authorList>
    </citation>
    <scope>NUCLEOTIDE SEQUENCE [LARGE SCALE GENOMIC DNA]</scope>
    <source>
        <strain>A0248</strain>
    </source>
</reference>
<keyword id="KW-0067">ATP-binding</keyword>
<keyword id="KW-0963">Cytoplasm</keyword>
<keyword id="KW-0227">DNA damage</keyword>
<keyword id="KW-0234">DNA repair</keyword>
<keyword id="KW-0235">DNA replication</keyword>
<keyword id="KW-0238">DNA-binding</keyword>
<keyword id="KW-0547">Nucleotide-binding</keyword>
<keyword id="KW-0742">SOS response</keyword>
<evidence type="ECO:0000255" key="1">
    <source>
        <dbReference type="HAMAP-Rule" id="MF_00365"/>
    </source>
</evidence>
<gene>
    <name evidence="1" type="primary">recF</name>
    <name type="ordered locus">BAA_0004</name>
</gene>
<name>RECF_BACAA</name>
<dbReference type="EMBL" id="CP001598">
    <property type="protein sequence ID" value="ACQ48913.1"/>
    <property type="molecule type" value="Genomic_DNA"/>
</dbReference>
<dbReference type="RefSeq" id="WP_000470753.1">
    <property type="nucleotide sequence ID" value="NC_012659.1"/>
</dbReference>
<dbReference type="SMR" id="C3P8P8"/>
<dbReference type="GeneID" id="45020038"/>
<dbReference type="KEGG" id="bai:BAA_0004"/>
<dbReference type="HOGENOM" id="CLU_040267_0_1_9"/>
<dbReference type="GO" id="GO:0005737">
    <property type="term" value="C:cytoplasm"/>
    <property type="evidence" value="ECO:0007669"/>
    <property type="project" value="UniProtKB-SubCell"/>
</dbReference>
<dbReference type="GO" id="GO:0005524">
    <property type="term" value="F:ATP binding"/>
    <property type="evidence" value="ECO:0007669"/>
    <property type="project" value="UniProtKB-UniRule"/>
</dbReference>
<dbReference type="GO" id="GO:0003697">
    <property type="term" value="F:single-stranded DNA binding"/>
    <property type="evidence" value="ECO:0007669"/>
    <property type="project" value="UniProtKB-UniRule"/>
</dbReference>
<dbReference type="GO" id="GO:0006260">
    <property type="term" value="P:DNA replication"/>
    <property type="evidence" value="ECO:0007669"/>
    <property type="project" value="UniProtKB-UniRule"/>
</dbReference>
<dbReference type="GO" id="GO:0000731">
    <property type="term" value="P:DNA synthesis involved in DNA repair"/>
    <property type="evidence" value="ECO:0007669"/>
    <property type="project" value="TreeGrafter"/>
</dbReference>
<dbReference type="GO" id="GO:0006302">
    <property type="term" value="P:double-strand break repair"/>
    <property type="evidence" value="ECO:0007669"/>
    <property type="project" value="TreeGrafter"/>
</dbReference>
<dbReference type="GO" id="GO:0009432">
    <property type="term" value="P:SOS response"/>
    <property type="evidence" value="ECO:0007669"/>
    <property type="project" value="UniProtKB-UniRule"/>
</dbReference>
<dbReference type="CDD" id="cd03242">
    <property type="entry name" value="ABC_RecF"/>
    <property type="match status" value="1"/>
</dbReference>
<dbReference type="FunFam" id="1.20.1050.90:FF:000002">
    <property type="entry name" value="DNA replication and repair protein RecF"/>
    <property type="match status" value="1"/>
</dbReference>
<dbReference type="FunFam" id="3.40.50.300:FF:000400">
    <property type="entry name" value="DNA replication and repair protein RecF"/>
    <property type="match status" value="1"/>
</dbReference>
<dbReference type="Gene3D" id="3.40.50.300">
    <property type="entry name" value="P-loop containing nucleotide triphosphate hydrolases"/>
    <property type="match status" value="1"/>
</dbReference>
<dbReference type="Gene3D" id="1.20.1050.90">
    <property type="entry name" value="RecF/RecN/SMC, N-terminal domain"/>
    <property type="match status" value="1"/>
</dbReference>
<dbReference type="HAMAP" id="MF_00365">
    <property type="entry name" value="RecF"/>
    <property type="match status" value="1"/>
</dbReference>
<dbReference type="InterPro" id="IPR001238">
    <property type="entry name" value="DNA-binding_RecF"/>
</dbReference>
<dbReference type="InterPro" id="IPR018078">
    <property type="entry name" value="DNA-binding_RecF_CS"/>
</dbReference>
<dbReference type="InterPro" id="IPR027417">
    <property type="entry name" value="P-loop_NTPase"/>
</dbReference>
<dbReference type="InterPro" id="IPR003395">
    <property type="entry name" value="RecF/RecN/SMC_N"/>
</dbReference>
<dbReference type="InterPro" id="IPR042174">
    <property type="entry name" value="RecF_2"/>
</dbReference>
<dbReference type="NCBIfam" id="TIGR00611">
    <property type="entry name" value="recf"/>
    <property type="match status" value="1"/>
</dbReference>
<dbReference type="PANTHER" id="PTHR32182">
    <property type="entry name" value="DNA REPLICATION AND REPAIR PROTEIN RECF"/>
    <property type="match status" value="1"/>
</dbReference>
<dbReference type="PANTHER" id="PTHR32182:SF0">
    <property type="entry name" value="DNA REPLICATION AND REPAIR PROTEIN RECF"/>
    <property type="match status" value="1"/>
</dbReference>
<dbReference type="Pfam" id="PF02463">
    <property type="entry name" value="SMC_N"/>
    <property type="match status" value="1"/>
</dbReference>
<dbReference type="SUPFAM" id="SSF52540">
    <property type="entry name" value="P-loop containing nucleoside triphosphate hydrolases"/>
    <property type="match status" value="1"/>
</dbReference>
<dbReference type="PROSITE" id="PS00617">
    <property type="entry name" value="RECF_1"/>
    <property type="match status" value="1"/>
</dbReference>
<dbReference type="PROSITE" id="PS00618">
    <property type="entry name" value="RECF_2"/>
    <property type="match status" value="1"/>
</dbReference>
<accession>C3P8P8</accession>
<protein>
    <recommendedName>
        <fullName evidence="1">DNA replication and repair protein RecF</fullName>
    </recommendedName>
</protein>